<keyword id="KW-0028">Amino-acid biosynthesis</keyword>
<keyword id="KW-0479">Metal-binding</keyword>
<keyword id="KW-0486">Methionine biosynthesis</keyword>
<keyword id="KW-0520">NAD</keyword>
<keyword id="KW-0521">NADP</keyword>
<keyword id="KW-0560">Oxidoreductase</keyword>
<keyword id="KW-1185">Reference proteome</keyword>
<keyword id="KW-0915">Sodium</keyword>
<keyword id="KW-0791">Threonine biosynthesis</keyword>
<gene>
    <name type="primary">hom</name>
    <name type="ordered locus">ML1129</name>
</gene>
<protein>
    <recommendedName>
        <fullName>Homoserine dehydrogenase</fullName>
        <shortName>HDH</shortName>
        <shortName>HSD</shortName>
        <ecNumber evidence="3">1.1.1.3</ecNumber>
    </recommendedName>
</protein>
<organism>
    <name type="scientific">Mycobacterium leprae (strain TN)</name>
    <dbReference type="NCBI Taxonomy" id="272631"/>
    <lineage>
        <taxon>Bacteria</taxon>
        <taxon>Bacillati</taxon>
        <taxon>Actinomycetota</taxon>
        <taxon>Actinomycetes</taxon>
        <taxon>Mycobacteriales</taxon>
        <taxon>Mycobacteriaceae</taxon>
        <taxon>Mycobacterium</taxon>
    </lineage>
</organism>
<accession>P46806</accession>
<evidence type="ECO:0000250" key="1">
    <source>
        <dbReference type="UniProtKB" id="F9VNG5"/>
    </source>
</evidence>
<evidence type="ECO:0000250" key="2">
    <source>
        <dbReference type="UniProtKB" id="O58802"/>
    </source>
</evidence>
<evidence type="ECO:0000250" key="3">
    <source>
        <dbReference type="UniProtKB" id="P31116"/>
    </source>
</evidence>
<evidence type="ECO:0000255" key="4"/>
<evidence type="ECO:0000255" key="5">
    <source>
        <dbReference type="PROSITE-ProRule" id="PRU01007"/>
    </source>
</evidence>
<evidence type="ECO:0000305" key="6"/>
<reference key="1">
    <citation type="submission" date="1994-09" db="EMBL/GenBank/DDBJ databases">
        <authorList>
            <person name="Smith D.R."/>
            <person name="Robison K."/>
        </authorList>
    </citation>
    <scope>NUCLEOTIDE SEQUENCE [GENOMIC DNA]</scope>
</reference>
<reference key="2">
    <citation type="journal article" date="2001" name="Nature">
        <title>Massive gene decay in the leprosy bacillus.</title>
        <authorList>
            <person name="Cole S.T."/>
            <person name="Eiglmeier K."/>
            <person name="Parkhill J."/>
            <person name="James K.D."/>
            <person name="Thomson N.R."/>
            <person name="Wheeler P.R."/>
            <person name="Honore N."/>
            <person name="Garnier T."/>
            <person name="Churcher C.M."/>
            <person name="Harris D.E."/>
            <person name="Mungall K.L."/>
            <person name="Basham D."/>
            <person name="Brown D."/>
            <person name="Chillingworth T."/>
            <person name="Connor R."/>
            <person name="Davies R.M."/>
            <person name="Devlin K."/>
            <person name="Duthoy S."/>
            <person name="Feltwell T."/>
            <person name="Fraser A."/>
            <person name="Hamlin N."/>
            <person name="Holroyd S."/>
            <person name="Hornsby T."/>
            <person name="Jagels K."/>
            <person name="Lacroix C."/>
            <person name="Maclean J."/>
            <person name="Moule S."/>
            <person name="Murphy L.D."/>
            <person name="Oliver K."/>
            <person name="Quail M.A."/>
            <person name="Rajandream M.A."/>
            <person name="Rutherford K.M."/>
            <person name="Rutter S."/>
            <person name="Seeger K."/>
            <person name="Simon S."/>
            <person name="Simmonds M."/>
            <person name="Skelton J."/>
            <person name="Squares R."/>
            <person name="Squares S."/>
            <person name="Stevens K."/>
            <person name="Taylor K."/>
            <person name="Whitehead S."/>
            <person name="Woodward J.R."/>
            <person name="Barrell B.G."/>
        </authorList>
    </citation>
    <scope>NUCLEOTIDE SEQUENCE [LARGE SCALE GENOMIC DNA]</scope>
    <source>
        <strain>TN</strain>
    </source>
</reference>
<comment type="function">
    <text evidence="3">Catalyzes the conversion of L-aspartate-beta-semialdehyde (L-Asa) to L-homoserine (L-Hse), the third step in the biosynthesis of threonine and methionine from aspartate.</text>
</comment>
<comment type="catalytic activity">
    <reaction evidence="3">
        <text>L-homoserine + NADP(+) = L-aspartate 4-semialdehyde + NADPH + H(+)</text>
        <dbReference type="Rhea" id="RHEA:15761"/>
        <dbReference type="ChEBI" id="CHEBI:15378"/>
        <dbReference type="ChEBI" id="CHEBI:57476"/>
        <dbReference type="ChEBI" id="CHEBI:57783"/>
        <dbReference type="ChEBI" id="CHEBI:58349"/>
        <dbReference type="ChEBI" id="CHEBI:537519"/>
        <dbReference type="EC" id="1.1.1.3"/>
    </reaction>
    <physiologicalReaction direction="right-to-left" evidence="3">
        <dbReference type="Rhea" id="RHEA:15763"/>
    </physiologicalReaction>
</comment>
<comment type="catalytic activity">
    <reaction evidence="3">
        <text>L-homoserine + NAD(+) = L-aspartate 4-semialdehyde + NADH + H(+)</text>
        <dbReference type="Rhea" id="RHEA:15757"/>
        <dbReference type="ChEBI" id="CHEBI:15378"/>
        <dbReference type="ChEBI" id="CHEBI:57476"/>
        <dbReference type="ChEBI" id="CHEBI:57540"/>
        <dbReference type="ChEBI" id="CHEBI:57945"/>
        <dbReference type="ChEBI" id="CHEBI:537519"/>
        <dbReference type="EC" id="1.1.1.3"/>
    </reaction>
    <physiologicalReaction direction="right-to-left" evidence="3">
        <dbReference type="Rhea" id="RHEA:15759"/>
    </physiologicalReaction>
</comment>
<comment type="cofactor">
    <cofactor evidence="3">
        <name>a metal cation</name>
        <dbReference type="ChEBI" id="CHEBI:25213"/>
    </cofactor>
    <text evidence="3">A sodium ion is seen in the structure; a metal ion may subtly affect the relative position of the nucleotide-binding region to influence enzyme activity, and could increase the stability of the enzyme.</text>
</comment>
<comment type="pathway">
    <text evidence="3">Amino-acid biosynthesis; L-methionine biosynthesis via de novo pathway; L-homoserine from L-aspartate: step 3/3.</text>
</comment>
<comment type="pathway">
    <text evidence="3">Amino-acid biosynthesis; L-threonine biosynthesis; L-threonine from L-aspartate: step 3/5.</text>
</comment>
<comment type="similarity">
    <text evidence="6">Belongs to the homoserine dehydrogenase family.</text>
</comment>
<feature type="chain" id="PRO_0000066701" description="Homoserine dehydrogenase">
    <location>
        <begin position="1"/>
        <end position="441"/>
    </location>
</feature>
<feature type="domain" description="ACT" evidence="5">
    <location>
        <begin position="356"/>
        <end position="435"/>
    </location>
</feature>
<feature type="active site" description="Proton donor" evidence="4">
    <location>
        <position position="207"/>
    </location>
</feature>
<feature type="binding site" evidence="1">
    <location>
        <position position="17"/>
    </location>
    <ligand>
        <name>NADP(+)</name>
        <dbReference type="ChEBI" id="CHEBI:58349"/>
    </ligand>
</feature>
<feature type="binding site" evidence="3">
    <location>
        <position position="18"/>
    </location>
    <ligand>
        <name>NAD(+)</name>
        <dbReference type="ChEBI" id="CHEBI:57540"/>
    </ligand>
</feature>
<feature type="binding site" evidence="1">
    <location>
        <position position="18"/>
    </location>
    <ligand>
        <name>NADP(+)</name>
        <dbReference type="ChEBI" id="CHEBI:58349"/>
    </ligand>
</feature>
<feature type="binding site" evidence="2">
    <location>
        <position position="18"/>
    </location>
    <ligand>
        <name>NADPH</name>
        <dbReference type="ChEBI" id="CHEBI:57783"/>
    </ligand>
</feature>
<feature type="binding site" evidence="3">
    <location>
        <position position="47"/>
    </location>
    <ligand>
        <name>NAD(+)</name>
        <dbReference type="ChEBI" id="CHEBI:57540"/>
    </ligand>
</feature>
<feature type="binding site" evidence="1">
    <location>
        <position position="49"/>
    </location>
    <ligand>
        <name>NADP(+)</name>
        <dbReference type="ChEBI" id="CHEBI:58349"/>
    </ligand>
</feature>
<feature type="binding site" evidence="2">
    <location>
        <position position="49"/>
    </location>
    <ligand>
        <name>NADPH</name>
        <dbReference type="ChEBI" id="CHEBI:57783"/>
    </ligand>
</feature>
<feature type="binding site" evidence="1">
    <location>
        <position position="50"/>
    </location>
    <ligand>
        <name>NADP(+)</name>
        <dbReference type="ChEBI" id="CHEBI:58349"/>
    </ligand>
</feature>
<feature type="binding site" evidence="1">
    <location>
        <position position="107"/>
    </location>
    <ligand>
        <name>NADP(+)</name>
        <dbReference type="ChEBI" id="CHEBI:58349"/>
    </ligand>
</feature>
<feature type="binding site" evidence="2">
    <location>
        <position position="107"/>
    </location>
    <ligand>
        <name>NADPH</name>
        <dbReference type="ChEBI" id="CHEBI:57783"/>
    </ligand>
</feature>
<feature type="binding site" evidence="3">
    <location>
        <position position="131"/>
    </location>
    <ligand>
        <name>Na(+)</name>
        <dbReference type="ChEBI" id="CHEBI:29101"/>
    </ligand>
</feature>
<feature type="binding site" evidence="3">
    <location>
        <position position="134"/>
    </location>
    <ligand>
        <name>Na(+)</name>
        <dbReference type="ChEBI" id="CHEBI:29101"/>
    </ligand>
</feature>
<feature type="binding site" evidence="3">
    <location>
        <position position="136"/>
    </location>
    <ligand>
        <name>Na(+)</name>
        <dbReference type="ChEBI" id="CHEBI:29101"/>
    </ligand>
</feature>
<feature type="binding site" evidence="3">
    <location>
        <position position="138"/>
    </location>
    <ligand>
        <name>Na(+)</name>
        <dbReference type="ChEBI" id="CHEBI:29101"/>
    </ligand>
</feature>
<feature type="binding site" evidence="1">
    <location>
        <position position="189"/>
    </location>
    <ligand>
        <name>NADP(+)</name>
        <dbReference type="ChEBI" id="CHEBI:58349"/>
    </ligand>
</feature>
<feature type="binding site" evidence="3">
    <location>
        <position position="192"/>
    </location>
    <ligand>
        <name>L-homoserine</name>
        <dbReference type="ChEBI" id="CHEBI:57476"/>
    </ligand>
</feature>
<feature type="binding site" evidence="1">
    <location>
        <position position="192"/>
    </location>
    <ligand>
        <name>NADP(+)</name>
        <dbReference type="ChEBI" id="CHEBI:58349"/>
    </ligand>
</feature>
<feature type="binding site" evidence="3">
    <location>
        <position position="203"/>
    </location>
    <ligand>
        <name>L-homoserine</name>
        <dbReference type="ChEBI" id="CHEBI:57476"/>
    </ligand>
</feature>
<feature type="binding site" evidence="3">
    <location>
        <position position="309"/>
    </location>
    <ligand>
        <name>NAD(+)</name>
        <dbReference type="ChEBI" id="CHEBI:57540"/>
    </ligand>
</feature>
<feature type="binding site" evidence="1">
    <location>
        <position position="309"/>
    </location>
    <ligand>
        <name>NADP(+)</name>
        <dbReference type="ChEBI" id="CHEBI:58349"/>
    </ligand>
</feature>
<feature type="binding site" evidence="2">
    <location>
        <position position="309"/>
    </location>
    <ligand>
        <name>NADPH</name>
        <dbReference type="ChEBI" id="CHEBI:57783"/>
    </ligand>
</feature>
<proteinExistence type="inferred from homology"/>
<dbReference type="EC" id="1.1.1.3" evidence="3"/>
<dbReference type="EMBL" id="U15186">
    <property type="protein sequence ID" value="AAA63101.1"/>
    <property type="molecule type" value="Genomic_DNA"/>
</dbReference>
<dbReference type="EMBL" id="AL583920">
    <property type="protein sequence ID" value="CAC31510.1"/>
    <property type="molecule type" value="Genomic_DNA"/>
</dbReference>
<dbReference type="PIR" id="T09992">
    <property type="entry name" value="T09992"/>
</dbReference>
<dbReference type="RefSeq" id="NP_301823.1">
    <property type="nucleotide sequence ID" value="NC_002677.1"/>
</dbReference>
<dbReference type="RefSeq" id="WP_010908147.1">
    <property type="nucleotide sequence ID" value="NC_002677.1"/>
</dbReference>
<dbReference type="SMR" id="P46806"/>
<dbReference type="STRING" id="272631.gene:17574956"/>
<dbReference type="KEGG" id="mle:ML1129"/>
<dbReference type="PATRIC" id="fig|272631.5.peg.2051"/>
<dbReference type="Leproma" id="ML1129"/>
<dbReference type="eggNOG" id="COG0460">
    <property type="taxonomic scope" value="Bacteria"/>
</dbReference>
<dbReference type="HOGENOM" id="CLU_009116_1_0_11"/>
<dbReference type="OrthoDB" id="9808167at2"/>
<dbReference type="BRENDA" id="1.1.1.3">
    <property type="organism ID" value="3504"/>
</dbReference>
<dbReference type="UniPathway" id="UPA00050">
    <property type="reaction ID" value="UER00063"/>
</dbReference>
<dbReference type="UniPathway" id="UPA00051">
    <property type="reaction ID" value="UER00465"/>
</dbReference>
<dbReference type="Proteomes" id="UP000000806">
    <property type="component" value="Chromosome"/>
</dbReference>
<dbReference type="GO" id="GO:0004412">
    <property type="term" value="F:homoserine dehydrogenase activity"/>
    <property type="evidence" value="ECO:0000250"/>
    <property type="project" value="UniProtKB"/>
</dbReference>
<dbReference type="GO" id="GO:0046872">
    <property type="term" value="F:metal ion binding"/>
    <property type="evidence" value="ECO:0007669"/>
    <property type="project" value="UniProtKB-KW"/>
</dbReference>
<dbReference type="GO" id="GO:0070403">
    <property type="term" value="F:NAD+ binding"/>
    <property type="evidence" value="ECO:0000250"/>
    <property type="project" value="UniProtKB"/>
</dbReference>
<dbReference type="GO" id="GO:0050661">
    <property type="term" value="F:NADP binding"/>
    <property type="evidence" value="ECO:0007669"/>
    <property type="project" value="InterPro"/>
</dbReference>
<dbReference type="GO" id="GO:0009086">
    <property type="term" value="P:methionine biosynthetic process"/>
    <property type="evidence" value="ECO:0000250"/>
    <property type="project" value="UniProtKB"/>
</dbReference>
<dbReference type="GO" id="GO:0009088">
    <property type="term" value="P:threonine biosynthetic process"/>
    <property type="evidence" value="ECO:0000250"/>
    <property type="project" value="UniProtKB"/>
</dbReference>
<dbReference type="CDD" id="cd04881">
    <property type="entry name" value="ACT_HSDH-Hom"/>
    <property type="match status" value="1"/>
</dbReference>
<dbReference type="FunFam" id="3.30.360.10:FF:000005">
    <property type="entry name" value="Homoserine dehydrogenase"/>
    <property type="match status" value="1"/>
</dbReference>
<dbReference type="Gene3D" id="3.30.70.260">
    <property type="match status" value="1"/>
</dbReference>
<dbReference type="Gene3D" id="3.30.360.10">
    <property type="entry name" value="Dihydrodipicolinate Reductase, domain 2"/>
    <property type="match status" value="1"/>
</dbReference>
<dbReference type="Gene3D" id="3.40.50.720">
    <property type="entry name" value="NAD(P)-binding Rossmann-like Domain"/>
    <property type="match status" value="1"/>
</dbReference>
<dbReference type="InterPro" id="IPR045865">
    <property type="entry name" value="ACT-like_dom_sf"/>
</dbReference>
<dbReference type="InterPro" id="IPR002912">
    <property type="entry name" value="ACT_dom"/>
</dbReference>
<dbReference type="InterPro" id="IPR005106">
    <property type="entry name" value="Asp/hSer_DH_NAD-bd"/>
</dbReference>
<dbReference type="InterPro" id="IPR016204">
    <property type="entry name" value="HDH"/>
</dbReference>
<dbReference type="InterPro" id="IPR001342">
    <property type="entry name" value="HDH_cat"/>
</dbReference>
<dbReference type="InterPro" id="IPR019811">
    <property type="entry name" value="HDH_CS"/>
</dbReference>
<dbReference type="InterPro" id="IPR036291">
    <property type="entry name" value="NAD(P)-bd_dom_sf"/>
</dbReference>
<dbReference type="NCBIfam" id="NF004976">
    <property type="entry name" value="PRK06349.1"/>
    <property type="match status" value="1"/>
</dbReference>
<dbReference type="PANTHER" id="PTHR43331">
    <property type="entry name" value="HOMOSERINE DEHYDROGENASE"/>
    <property type="match status" value="1"/>
</dbReference>
<dbReference type="PANTHER" id="PTHR43331:SF1">
    <property type="entry name" value="HOMOSERINE DEHYDROGENASE"/>
    <property type="match status" value="1"/>
</dbReference>
<dbReference type="Pfam" id="PF01842">
    <property type="entry name" value="ACT"/>
    <property type="match status" value="1"/>
</dbReference>
<dbReference type="Pfam" id="PF00742">
    <property type="entry name" value="Homoserine_dh"/>
    <property type="match status" value="1"/>
</dbReference>
<dbReference type="Pfam" id="PF03447">
    <property type="entry name" value="NAD_binding_3"/>
    <property type="match status" value="1"/>
</dbReference>
<dbReference type="PIRSF" id="PIRSF000098">
    <property type="entry name" value="Homoser_dehydrog"/>
    <property type="match status" value="1"/>
</dbReference>
<dbReference type="SUPFAM" id="SSF55021">
    <property type="entry name" value="ACT-like"/>
    <property type="match status" value="1"/>
</dbReference>
<dbReference type="SUPFAM" id="SSF55347">
    <property type="entry name" value="Glyceraldehyde-3-phosphate dehydrogenase-like, C-terminal domain"/>
    <property type="match status" value="1"/>
</dbReference>
<dbReference type="SUPFAM" id="SSF51735">
    <property type="entry name" value="NAD(P)-binding Rossmann-fold domains"/>
    <property type="match status" value="1"/>
</dbReference>
<dbReference type="PROSITE" id="PS51671">
    <property type="entry name" value="ACT"/>
    <property type="match status" value="1"/>
</dbReference>
<dbReference type="PROSITE" id="PS01042">
    <property type="entry name" value="HOMOSER_DHGENASE"/>
    <property type="match status" value="1"/>
</dbReference>
<sequence length="441" mass="45606">MFSDERTVGVAVLGLGNVGSEVVRIIEGSADDLAARIGAPLMLRGIGVRRVAVDRGVPVDLLTDNIEELVSRADVDIVVEVMGPVELSRKAILSALEHGKSVVTANKALLAASTGELAQAAESAHVDLYFEAAVAGAIPVIRPLTQSLAGDTVLRVAGIVNGTTNYILSAMDSTGADYDSALAGARALGYAEADPTADVEGHDAAAKAAILASIAFHTRVTADDVYREGITKITPADFVSARALGCTIKLLFICERITAADGQQRVSARVYPALVPMSHPLATVSGAFNAVVVEAEAAGRLMFYGQGAGGAPTASAVTGDLVMAARNRVLGSRGPKESKYAQLPMETIGFISTRYYVSMNVADKPGVLSGVAAEFAKREVSIAEVRQEGVVDDGGRRVGARIVVVTHGATDAALSETVDALADLDVVQGVTSVLRLEGISL</sequence>
<name>DHOM_MYCLE</name>